<organism>
    <name type="scientific">Anaplasma marginale (strain St. Maries)</name>
    <dbReference type="NCBI Taxonomy" id="234826"/>
    <lineage>
        <taxon>Bacteria</taxon>
        <taxon>Pseudomonadati</taxon>
        <taxon>Pseudomonadota</taxon>
        <taxon>Alphaproteobacteria</taxon>
        <taxon>Rickettsiales</taxon>
        <taxon>Anaplasmataceae</taxon>
        <taxon>Anaplasma</taxon>
    </lineage>
</organism>
<reference key="1">
    <citation type="journal article" date="2005" name="Proc. Natl. Acad. Sci. U.S.A.">
        <title>Complete genome sequencing of Anaplasma marginale reveals that the surface is skewed to two superfamilies of outer membrane proteins.</title>
        <authorList>
            <person name="Brayton K.A."/>
            <person name="Kappmeyer L.S."/>
            <person name="Herndon D.R."/>
            <person name="Dark M.J."/>
            <person name="Tibbals D.L."/>
            <person name="Palmer G.H."/>
            <person name="McGuire T.C."/>
            <person name="Knowles D.P. Jr."/>
        </authorList>
    </citation>
    <scope>NUCLEOTIDE SEQUENCE [LARGE SCALE GENOMIC DNA]</scope>
    <source>
        <strain>St. Maries</strain>
    </source>
</reference>
<feature type="chain" id="PRO_0000167680" description="Pyridoxine/pyridoxamine 5'-phosphate oxidase">
    <location>
        <begin position="1"/>
        <end position="218"/>
    </location>
</feature>
<feature type="binding site" evidence="1">
    <location>
        <begin position="66"/>
        <end position="71"/>
    </location>
    <ligand>
        <name>FMN</name>
        <dbReference type="ChEBI" id="CHEBI:58210"/>
    </ligand>
</feature>
<feature type="binding site" evidence="1">
    <location>
        <position position="71"/>
    </location>
    <ligand>
        <name>substrate</name>
    </ligand>
</feature>
<feature type="binding site" evidence="1">
    <location>
        <position position="87"/>
    </location>
    <ligand>
        <name>FMN</name>
        <dbReference type="ChEBI" id="CHEBI:58210"/>
    </ligand>
</feature>
<feature type="binding site" evidence="1">
    <location>
        <position position="88"/>
    </location>
    <ligand>
        <name>FMN</name>
        <dbReference type="ChEBI" id="CHEBI:58210"/>
    </ligand>
</feature>
<feature type="binding site" evidence="1">
    <location>
        <position position="110"/>
    </location>
    <ligand>
        <name>FMN</name>
        <dbReference type="ChEBI" id="CHEBI:58210"/>
    </ligand>
</feature>
<feature type="binding site" evidence="1">
    <location>
        <position position="128"/>
    </location>
    <ligand>
        <name>substrate</name>
    </ligand>
</feature>
<feature type="binding site" evidence="1">
    <location>
        <position position="132"/>
    </location>
    <ligand>
        <name>substrate</name>
    </ligand>
</feature>
<feature type="binding site" evidence="1">
    <location>
        <position position="136"/>
    </location>
    <ligand>
        <name>substrate</name>
    </ligand>
</feature>
<feature type="binding site" evidence="1">
    <location>
        <begin position="145"/>
        <end position="146"/>
    </location>
    <ligand>
        <name>FMN</name>
        <dbReference type="ChEBI" id="CHEBI:58210"/>
    </ligand>
</feature>
<feature type="binding site" evidence="1">
    <location>
        <position position="190"/>
    </location>
    <ligand>
        <name>FMN</name>
        <dbReference type="ChEBI" id="CHEBI:58210"/>
    </ligand>
</feature>
<feature type="binding site" evidence="1">
    <location>
        <begin position="196"/>
        <end position="198"/>
    </location>
    <ligand>
        <name>substrate</name>
    </ligand>
</feature>
<feature type="binding site" evidence="1">
    <location>
        <position position="200"/>
    </location>
    <ligand>
        <name>FMN</name>
        <dbReference type="ChEBI" id="CHEBI:58210"/>
    </ligand>
</feature>
<proteinExistence type="inferred from homology"/>
<gene>
    <name evidence="1" type="primary">pdxH</name>
    <name type="ordered locus">AM281</name>
</gene>
<keyword id="KW-0285">Flavoprotein</keyword>
<keyword id="KW-0288">FMN</keyword>
<keyword id="KW-0560">Oxidoreductase</keyword>
<keyword id="KW-0664">Pyridoxine biosynthesis</keyword>
<evidence type="ECO:0000255" key="1">
    <source>
        <dbReference type="HAMAP-Rule" id="MF_01629"/>
    </source>
</evidence>
<evidence type="ECO:0000305" key="2"/>
<accession>Q5PBF2</accession>
<protein>
    <recommendedName>
        <fullName evidence="1">Pyridoxine/pyridoxamine 5'-phosphate oxidase</fullName>
        <ecNumber evidence="1">1.4.3.5</ecNumber>
    </recommendedName>
    <alternativeName>
        <fullName evidence="1">PNP/PMP oxidase</fullName>
        <shortName evidence="1">PNPOx</shortName>
    </alternativeName>
    <alternativeName>
        <fullName evidence="1">Pyridoxal 5'-phosphate synthase</fullName>
    </alternativeName>
</protein>
<name>PDXH_ANAMM</name>
<dbReference type="EC" id="1.4.3.5" evidence="1"/>
<dbReference type="EMBL" id="CP000030">
    <property type="protein sequence ID" value="AAV86377.1"/>
    <property type="status" value="ALT_INIT"/>
    <property type="molecule type" value="Genomic_DNA"/>
</dbReference>
<dbReference type="SMR" id="Q5PBF2"/>
<dbReference type="KEGG" id="ama:AM281"/>
<dbReference type="HOGENOM" id="CLU_032263_2_2_5"/>
<dbReference type="UniPathway" id="UPA01068">
    <property type="reaction ID" value="UER00304"/>
</dbReference>
<dbReference type="UniPathway" id="UPA01068">
    <property type="reaction ID" value="UER00305"/>
</dbReference>
<dbReference type="GO" id="GO:0010181">
    <property type="term" value="F:FMN binding"/>
    <property type="evidence" value="ECO:0007669"/>
    <property type="project" value="UniProtKB-UniRule"/>
</dbReference>
<dbReference type="GO" id="GO:0004733">
    <property type="term" value="F:pyridoxamine phosphate oxidase activity"/>
    <property type="evidence" value="ECO:0007669"/>
    <property type="project" value="UniProtKB-UniRule"/>
</dbReference>
<dbReference type="GO" id="GO:0008615">
    <property type="term" value="P:pyridoxine biosynthetic process"/>
    <property type="evidence" value="ECO:0007669"/>
    <property type="project" value="UniProtKB-KW"/>
</dbReference>
<dbReference type="Gene3D" id="2.30.110.10">
    <property type="entry name" value="Electron Transport, Fmn-binding Protein, Chain A"/>
    <property type="match status" value="1"/>
</dbReference>
<dbReference type="HAMAP" id="MF_01629">
    <property type="entry name" value="PdxH"/>
    <property type="match status" value="1"/>
</dbReference>
<dbReference type="InterPro" id="IPR000659">
    <property type="entry name" value="Pyridox_Oxase"/>
</dbReference>
<dbReference type="InterPro" id="IPR019740">
    <property type="entry name" value="Pyridox_Oxase_CS"/>
</dbReference>
<dbReference type="InterPro" id="IPR011576">
    <property type="entry name" value="Pyridox_Oxase_N"/>
</dbReference>
<dbReference type="InterPro" id="IPR019576">
    <property type="entry name" value="Pyridoxamine_oxidase_dimer_C"/>
</dbReference>
<dbReference type="InterPro" id="IPR012349">
    <property type="entry name" value="Split_barrel_FMN-bd"/>
</dbReference>
<dbReference type="NCBIfam" id="TIGR00558">
    <property type="entry name" value="pdxH"/>
    <property type="match status" value="1"/>
</dbReference>
<dbReference type="NCBIfam" id="NF004231">
    <property type="entry name" value="PRK05679.1"/>
    <property type="match status" value="1"/>
</dbReference>
<dbReference type="PANTHER" id="PTHR10851:SF0">
    <property type="entry name" value="PYRIDOXINE-5'-PHOSPHATE OXIDASE"/>
    <property type="match status" value="1"/>
</dbReference>
<dbReference type="PANTHER" id="PTHR10851">
    <property type="entry name" value="PYRIDOXINE-5-PHOSPHATE OXIDASE"/>
    <property type="match status" value="1"/>
</dbReference>
<dbReference type="Pfam" id="PF10590">
    <property type="entry name" value="PNP_phzG_C"/>
    <property type="match status" value="1"/>
</dbReference>
<dbReference type="Pfam" id="PF01243">
    <property type="entry name" value="PNPOx_N"/>
    <property type="match status" value="1"/>
</dbReference>
<dbReference type="PIRSF" id="PIRSF000190">
    <property type="entry name" value="Pyd_amn-ph_oxd"/>
    <property type="match status" value="1"/>
</dbReference>
<dbReference type="SUPFAM" id="SSF50475">
    <property type="entry name" value="FMN-binding split barrel"/>
    <property type="match status" value="1"/>
</dbReference>
<dbReference type="PROSITE" id="PS01064">
    <property type="entry name" value="PYRIDOX_OXIDASE"/>
    <property type="match status" value="1"/>
</dbReference>
<comment type="function">
    <text evidence="1">Catalyzes the oxidation of either pyridoxine 5'-phosphate (PNP) or pyridoxamine 5'-phosphate (PMP) into pyridoxal 5'-phosphate (PLP).</text>
</comment>
<comment type="catalytic activity">
    <reaction evidence="1">
        <text>pyridoxamine 5'-phosphate + O2 + H2O = pyridoxal 5'-phosphate + H2O2 + NH4(+)</text>
        <dbReference type="Rhea" id="RHEA:15817"/>
        <dbReference type="ChEBI" id="CHEBI:15377"/>
        <dbReference type="ChEBI" id="CHEBI:15379"/>
        <dbReference type="ChEBI" id="CHEBI:16240"/>
        <dbReference type="ChEBI" id="CHEBI:28938"/>
        <dbReference type="ChEBI" id="CHEBI:58451"/>
        <dbReference type="ChEBI" id="CHEBI:597326"/>
        <dbReference type="EC" id="1.4.3.5"/>
    </reaction>
</comment>
<comment type="catalytic activity">
    <reaction evidence="1">
        <text>pyridoxine 5'-phosphate + O2 = pyridoxal 5'-phosphate + H2O2</text>
        <dbReference type="Rhea" id="RHEA:15149"/>
        <dbReference type="ChEBI" id="CHEBI:15379"/>
        <dbReference type="ChEBI" id="CHEBI:16240"/>
        <dbReference type="ChEBI" id="CHEBI:58589"/>
        <dbReference type="ChEBI" id="CHEBI:597326"/>
        <dbReference type="EC" id="1.4.3.5"/>
    </reaction>
</comment>
<comment type="cofactor">
    <cofactor evidence="1">
        <name>FMN</name>
        <dbReference type="ChEBI" id="CHEBI:58210"/>
    </cofactor>
    <text evidence="1">Binds 1 FMN per subunit.</text>
</comment>
<comment type="pathway">
    <text evidence="1">Cofactor metabolism; pyridoxal 5'-phosphate salvage; pyridoxal 5'-phosphate from pyridoxamine 5'-phosphate: step 1/1.</text>
</comment>
<comment type="pathway">
    <text evidence="1">Cofactor metabolism; pyridoxal 5'-phosphate salvage; pyridoxal 5'-phosphate from pyridoxine 5'-phosphate: step 1/1.</text>
</comment>
<comment type="subunit">
    <text evidence="1">Homodimer.</text>
</comment>
<comment type="similarity">
    <text evidence="1">Belongs to the pyridoxamine 5'-phosphate oxidase family.</text>
</comment>
<comment type="sequence caution" evidence="2">
    <conflict type="erroneous initiation">
        <sequence resource="EMBL-CDS" id="AAV86377"/>
    </conflict>
</comment>
<sequence length="218" mass="24885">MIDFFEGVSWLIMPFSGVCVREADSSPMDVFGLWYSEMLRATGAHMREPSAMVLATCDVQNRPSARVVLLKKYGEAGFEFVTNFNSRKGREIADNPQVALVFDWRHIGRQVRVEGLATLMDASESDAYHASRSRESKISAWCSQQSAVLESRKLLLEQFERERQRFDGQEIPRPGHWGGVRVVPHVVEFWEDGAHRLHSRKQYSRGDSGSWSCVDLYP</sequence>